<organism>
    <name type="scientific">Kluyveromyces lactis (strain ATCC 8585 / CBS 2359 / DSM 70799 / NBRC 1267 / NRRL Y-1140 / WM37)</name>
    <name type="common">Yeast</name>
    <name type="synonym">Candida sphaerica</name>
    <dbReference type="NCBI Taxonomy" id="284590"/>
    <lineage>
        <taxon>Eukaryota</taxon>
        <taxon>Fungi</taxon>
        <taxon>Dikarya</taxon>
        <taxon>Ascomycota</taxon>
        <taxon>Saccharomycotina</taxon>
        <taxon>Saccharomycetes</taxon>
        <taxon>Saccharomycetales</taxon>
        <taxon>Saccharomycetaceae</taxon>
        <taxon>Kluyveromyces</taxon>
    </lineage>
</organism>
<feature type="transit peptide" description="Mitochondrion" evidence="2">
    <location>
        <begin position="1"/>
        <end status="unknown"/>
    </location>
</feature>
<feature type="chain" id="PRO_0000022384" description="Protein SOM1, mitochondrial">
    <location>
        <begin status="unknown"/>
        <end position="71"/>
    </location>
</feature>
<name>SOM1_KLULA</name>
<sequence>MAPPTKILGLDTQQRMLQRGENCSLKSLVQNECAFNGNDYVCTPFKRLFEQCMVKDGRVLNIEVTNLNTNR</sequence>
<reference key="1">
    <citation type="journal article" date="1998" name="Mol. Gen. Genet.">
        <title>The Saccharomyces cerevisiae SOM1 gene: heterologous complementation studies, homologues in other organisms, and association of the gene product with the inner mitochondrial membrane.</title>
        <authorList>
            <person name="Bauerfeind M."/>
            <person name="Esser K."/>
            <person name="Michaelis G."/>
        </authorList>
    </citation>
    <scope>NUCLEOTIDE SEQUENCE [GENOMIC DNA]</scope>
    <source>
        <strain>ATCC 8585 / CBS 2359 / DSM 70799 / NBRC 1267 / NRRL Y-1140 / WM37</strain>
    </source>
</reference>
<reference key="2">
    <citation type="journal article" date="2004" name="Nature">
        <title>Genome evolution in yeasts.</title>
        <authorList>
            <person name="Dujon B."/>
            <person name="Sherman D."/>
            <person name="Fischer G."/>
            <person name="Durrens P."/>
            <person name="Casaregola S."/>
            <person name="Lafontaine I."/>
            <person name="de Montigny J."/>
            <person name="Marck C."/>
            <person name="Neuveglise C."/>
            <person name="Talla E."/>
            <person name="Goffard N."/>
            <person name="Frangeul L."/>
            <person name="Aigle M."/>
            <person name="Anthouard V."/>
            <person name="Babour A."/>
            <person name="Barbe V."/>
            <person name="Barnay S."/>
            <person name="Blanchin S."/>
            <person name="Beckerich J.-M."/>
            <person name="Beyne E."/>
            <person name="Bleykasten C."/>
            <person name="Boisrame A."/>
            <person name="Boyer J."/>
            <person name="Cattolico L."/>
            <person name="Confanioleri F."/>
            <person name="de Daruvar A."/>
            <person name="Despons L."/>
            <person name="Fabre E."/>
            <person name="Fairhead C."/>
            <person name="Ferry-Dumazet H."/>
            <person name="Groppi A."/>
            <person name="Hantraye F."/>
            <person name="Hennequin C."/>
            <person name="Jauniaux N."/>
            <person name="Joyet P."/>
            <person name="Kachouri R."/>
            <person name="Kerrest A."/>
            <person name="Koszul R."/>
            <person name="Lemaire M."/>
            <person name="Lesur I."/>
            <person name="Ma L."/>
            <person name="Muller H."/>
            <person name="Nicaud J.-M."/>
            <person name="Nikolski M."/>
            <person name="Oztas S."/>
            <person name="Ozier-Kalogeropoulos O."/>
            <person name="Pellenz S."/>
            <person name="Potier S."/>
            <person name="Richard G.-F."/>
            <person name="Straub M.-L."/>
            <person name="Suleau A."/>
            <person name="Swennen D."/>
            <person name="Tekaia F."/>
            <person name="Wesolowski-Louvel M."/>
            <person name="Westhof E."/>
            <person name="Wirth B."/>
            <person name="Zeniou-Meyer M."/>
            <person name="Zivanovic Y."/>
            <person name="Bolotin-Fukuhara M."/>
            <person name="Thierry A."/>
            <person name="Bouchier C."/>
            <person name="Caudron B."/>
            <person name="Scarpelli C."/>
            <person name="Gaillardin C."/>
            <person name="Weissenbach J."/>
            <person name="Wincker P."/>
            <person name="Souciet J.-L."/>
        </authorList>
    </citation>
    <scope>NUCLEOTIDE SEQUENCE [LARGE SCALE GENOMIC DNA]</scope>
    <source>
        <strain>ATCC 8585 / CBS 2359 / DSM 70799 / NBRC 1267 / NRRL Y-1140 / WM37</strain>
    </source>
</reference>
<comment type="function">
    <text evidence="1">Required for mitochondrial inner membrane peptidase function.</text>
</comment>
<comment type="subcellular location">
    <subcellularLocation>
        <location evidence="3">Mitochondrion inner membrane</location>
    </subcellularLocation>
</comment>
<dbReference type="EMBL" id="X95888">
    <property type="protein sequence ID" value="CAA65136.1"/>
    <property type="molecule type" value="Genomic_DNA"/>
</dbReference>
<dbReference type="EMBL" id="CR382124">
    <property type="protein sequence ID" value="CAH00207.1"/>
    <property type="molecule type" value="Genomic_DNA"/>
</dbReference>
<dbReference type="RefSeq" id="XP_453111.1">
    <property type="nucleotide sequence ID" value="XM_453111.1"/>
</dbReference>
<dbReference type="FunCoup" id="P78699">
    <property type="interactions" value="30"/>
</dbReference>
<dbReference type="STRING" id="284590.P78699"/>
<dbReference type="PaxDb" id="284590-P78699"/>
<dbReference type="KEGG" id="kla:KLLA0_D00880g"/>
<dbReference type="HOGENOM" id="CLU_160156_0_0_1"/>
<dbReference type="InParanoid" id="P78699"/>
<dbReference type="OMA" id="NECHFDG"/>
<dbReference type="Proteomes" id="UP000000598">
    <property type="component" value="Chromosome D"/>
</dbReference>
<dbReference type="GO" id="GO:0042720">
    <property type="term" value="C:mitochondrial inner membrane peptidase complex"/>
    <property type="evidence" value="ECO:0007669"/>
    <property type="project" value="InterPro"/>
</dbReference>
<dbReference type="InterPro" id="IPR024645">
    <property type="entry name" value="Mitochondr_Som1"/>
</dbReference>
<dbReference type="Pfam" id="PF11093">
    <property type="entry name" value="Mitochondr_Som1"/>
    <property type="match status" value="1"/>
</dbReference>
<gene>
    <name type="primary">SOM1</name>
    <name type="ordered locus">KLLA0D00880g</name>
</gene>
<evidence type="ECO:0000250" key="1"/>
<evidence type="ECO:0000255" key="2"/>
<evidence type="ECO:0000305" key="3"/>
<accession>P78699</accession>
<proteinExistence type="inferred from homology"/>
<keyword id="KW-0472">Membrane</keyword>
<keyword id="KW-0496">Mitochondrion</keyword>
<keyword id="KW-0999">Mitochondrion inner membrane</keyword>
<keyword id="KW-1185">Reference proteome</keyword>
<keyword id="KW-0809">Transit peptide</keyword>
<protein>
    <recommendedName>
        <fullName>Protein SOM1, mitochondrial</fullName>
    </recommendedName>
</protein>